<dbReference type="EMBL" id="CP000703">
    <property type="protein sequence ID" value="ABQ49553.1"/>
    <property type="molecule type" value="Genomic_DNA"/>
</dbReference>
<dbReference type="RefSeq" id="WP_000777188.1">
    <property type="nucleotide sequence ID" value="NC_009487.1"/>
</dbReference>
<dbReference type="SMR" id="A5ITN0"/>
<dbReference type="KEGG" id="saj:SaurJH9_1763"/>
<dbReference type="HOGENOM" id="CLU_070010_4_1_9"/>
<dbReference type="GO" id="GO:0016787">
    <property type="term" value="F:hydrolase activity"/>
    <property type="evidence" value="ECO:0007669"/>
    <property type="project" value="UniProtKB-UniRule"/>
</dbReference>
<dbReference type="CDD" id="cd06262">
    <property type="entry name" value="metallo-hydrolase-like_MBL-fold"/>
    <property type="match status" value="1"/>
</dbReference>
<dbReference type="Gene3D" id="3.60.15.10">
    <property type="entry name" value="Ribonuclease Z/Hydroxyacylglutathione hydrolase-like"/>
    <property type="match status" value="1"/>
</dbReference>
<dbReference type="HAMAP" id="MF_00457">
    <property type="entry name" value="UPF0173"/>
    <property type="match status" value="1"/>
</dbReference>
<dbReference type="InterPro" id="IPR001279">
    <property type="entry name" value="Metallo-B-lactamas"/>
</dbReference>
<dbReference type="InterPro" id="IPR036866">
    <property type="entry name" value="RibonucZ/Hydroxyglut_hydro"/>
</dbReference>
<dbReference type="InterPro" id="IPR022877">
    <property type="entry name" value="UPF0173"/>
</dbReference>
<dbReference type="InterPro" id="IPR050114">
    <property type="entry name" value="UPF0173_UPF0282_UlaG_hydrolase"/>
</dbReference>
<dbReference type="NCBIfam" id="NF001911">
    <property type="entry name" value="PRK00685.1"/>
    <property type="match status" value="1"/>
</dbReference>
<dbReference type="PANTHER" id="PTHR43546:SF3">
    <property type="entry name" value="UPF0173 METAL-DEPENDENT HYDROLASE MJ1163"/>
    <property type="match status" value="1"/>
</dbReference>
<dbReference type="PANTHER" id="PTHR43546">
    <property type="entry name" value="UPF0173 METAL-DEPENDENT HYDROLASE MJ1163-RELATED"/>
    <property type="match status" value="1"/>
</dbReference>
<dbReference type="Pfam" id="PF12706">
    <property type="entry name" value="Lactamase_B_2"/>
    <property type="match status" value="1"/>
</dbReference>
<dbReference type="SMART" id="SM00849">
    <property type="entry name" value="Lactamase_B"/>
    <property type="match status" value="1"/>
</dbReference>
<dbReference type="SUPFAM" id="SSF56281">
    <property type="entry name" value="Metallo-hydrolase/oxidoreductase"/>
    <property type="match status" value="1"/>
</dbReference>
<proteinExistence type="inferred from homology"/>
<name>Y1763_STAA9</name>
<evidence type="ECO:0000255" key="1">
    <source>
        <dbReference type="HAMAP-Rule" id="MF_00457"/>
    </source>
</evidence>
<accession>A5ITN0</accession>
<protein>
    <recommendedName>
        <fullName evidence="1">UPF0173 metal-dependent hydrolase SaurJH9_1763</fullName>
    </recommendedName>
</protein>
<feature type="chain" id="PRO_1000081128" description="UPF0173 metal-dependent hydrolase SaurJH9_1763">
    <location>
        <begin position="1"/>
        <end position="229"/>
    </location>
</feature>
<gene>
    <name type="ordered locus">SaurJH9_1763</name>
</gene>
<reference key="1">
    <citation type="submission" date="2007-05" db="EMBL/GenBank/DDBJ databases">
        <title>Complete sequence of chromosome of Staphylococcus aureus subsp. aureus JH9.</title>
        <authorList>
            <consortium name="US DOE Joint Genome Institute"/>
            <person name="Copeland A."/>
            <person name="Lucas S."/>
            <person name="Lapidus A."/>
            <person name="Barry K."/>
            <person name="Detter J.C."/>
            <person name="Glavina del Rio T."/>
            <person name="Hammon N."/>
            <person name="Israni S."/>
            <person name="Pitluck S."/>
            <person name="Chain P."/>
            <person name="Malfatti S."/>
            <person name="Shin M."/>
            <person name="Vergez L."/>
            <person name="Schmutz J."/>
            <person name="Larimer F."/>
            <person name="Land M."/>
            <person name="Hauser L."/>
            <person name="Kyrpides N."/>
            <person name="Kim E."/>
            <person name="Tomasz A."/>
            <person name="Richardson P."/>
        </authorList>
    </citation>
    <scope>NUCLEOTIDE SEQUENCE [LARGE SCALE GENOMIC DNA]</scope>
    <source>
        <strain>JH9</strain>
    </source>
</reference>
<sequence length="229" mass="25251">MKLSFHGQSTIYLEGNNKKVIVDPFISNNPKCDLNIETVQVDYIVLTHGHFDHFGDVVELAKKTGATVIGSAEMADYLSSYHGVENVHGMNIGGKANFDFGSVKFVQAFHSSSFTHENGIPVYLGMPMGIVFEVEGKTIYHTGDTGLFSDMSLIAKRHPVDVCFVPIGDNFTMGIDDASYAINEFIKPKISVPIHYDTFPLIEQDPQQFKDAVNVGDVQILKPGESVQF</sequence>
<comment type="similarity">
    <text evidence="1">Belongs to the UPF0173 family.</text>
</comment>
<organism>
    <name type="scientific">Staphylococcus aureus (strain JH9)</name>
    <dbReference type="NCBI Taxonomy" id="359786"/>
    <lineage>
        <taxon>Bacteria</taxon>
        <taxon>Bacillati</taxon>
        <taxon>Bacillota</taxon>
        <taxon>Bacilli</taxon>
        <taxon>Bacillales</taxon>
        <taxon>Staphylococcaceae</taxon>
        <taxon>Staphylococcus</taxon>
    </lineage>
</organism>
<keyword id="KW-0378">Hydrolase</keyword>